<reference key="1">
    <citation type="journal article" date="2006" name="J. Bacteriol.">
        <title>Complete genome sequence of the dehalorespiring bacterium Desulfitobacterium hafniense Y51 and comparison with Dehalococcoides ethenogenes 195.</title>
        <authorList>
            <person name="Nonaka H."/>
            <person name="Keresztes G."/>
            <person name="Shinoda Y."/>
            <person name="Ikenaga Y."/>
            <person name="Abe M."/>
            <person name="Naito K."/>
            <person name="Inatomi K."/>
            <person name="Furukawa K."/>
            <person name="Inui M."/>
            <person name="Yukawa H."/>
        </authorList>
    </citation>
    <scope>NUCLEOTIDE SEQUENCE [LARGE SCALE GENOMIC DNA]</scope>
    <source>
        <strain>Y51</strain>
    </source>
</reference>
<accession>Q24U37</accession>
<feature type="chain" id="PRO_0000296457" description="Large ribosomal subunit protein bL32">
    <location>
        <begin position="1"/>
        <end position="59"/>
    </location>
</feature>
<evidence type="ECO:0000255" key="1">
    <source>
        <dbReference type="HAMAP-Rule" id="MF_00340"/>
    </source>
</evidence>
<evidence type="ECO:0000305" key="2"/>
<keyword id="KW-1185">Reference proteome</keyword>
<keyword id="KW-0687">Ribonucleoprotein</keyword>
<keyword id="KW-0689">Ribosomal protein</keyword>
<organism>
    <name type="scientific">Desulfitobacterium hafniense (strain Y51)</name>
    <dbReference type="NCBI Taxonomy" id="138119"/>
    <lineage>
        <taxon>Bacteria</taxon>
        <taxon>Bacillati</taxon>
        <taxon>Bacillota</taxon>
        <taxon>Clostridia</taxon>
        <taxon>Eubacteriales</taxon>
        <taxon>Desulfitobacteriaceae</taxon>
        <taxon>Desulfitobacterium</taxon>
    </lineage>
</organism>
<gene>
    <name evidence="1" type="primary">rpmF</name>
    <name type="ordered locus">DSY2666</name>
</gene>
<dbReference type="EMBL" id="AP008230">
    <property type="protein sequence ID" value="BAE84455.1"/>
    <property type="molecule type" value="Genomic_DNA"/>
</dbReference>
<dbReference type="SMR" id="Q24U37"/>
<dbReference type="STRING" id="138119.DSY2666"/>
<dbReference type="KEGG" id="dsy:DSY2666"/>
<dbReference type="eggNOG" id="COG0333">
    <property type="taxonomic scope" value="Bacteria"/>
</dbReference>
<dbReference type="HOGENOM" id="CLU_129084_1_3_9"/>
<dbReference type="Proteomes" id="UP000001946">
    <property type="component" value="Chromosome"/>
</dbReference>
<dbReference type="GO" id="GO:0015934">
    <property type="term" value="C:large ribosomal subunit"/>
    <property type="evidence" value="ECO:0007669"/>
    <property type="project" value="InterPro"/>
</dbReference>
<dbReference type="GO" id="GO:0003735">
    <property type="term" value="F:structural constituent of ribosome"/>
    <property type="evidence" value="ECO:0007669"/>
    <property type="project" value="InterPro"/>
</dbReference>
<dbReference type="GO" id="GO:0006412">
    <property type="term" value="P:translation"/>
    <property type="evidence" value="ECO:0007669"/>
    <property type="project" value="UniProtKB-UniRule"/>
</dbReference>
<dbReference type="HAMAP" id="MF_00340">
    <property type="entry name" value="Ribosomal_bL32"/>
    <property type="match status" value="1"/>
</dbReference>
<dbReference type="InterPro" id="IPR002677">
    <property type="entry name" value="Ribosomal_bL32"/>
</dbReference>
<dbReference type="InterPro" id="IPR044957">
    <property type="entry name" value="Ribosomal_bL32_bact"/>
</dbReference>
<dbReference type="InterPro" id="IPR011332">
    <property type="entry name" value="Ribosomal_zn-bd"/>
</dbReference>
<dbReference type="NCBIfam" id="TIGR01031">
    <property type="entry name" value="rpmF_bact"/>
    <property type="match status" value="1"/>
</dbReference>
<dbReference type="PANTHER" id="PTHR35534">
    <property type="entry name" value="50S RIBOSOMAL PROTEIN L32"/>
    <property type="match status" value="1"/>
</dbReference>
<dbReference type="PANTHER" id="PTHR35534:SF1">
    <property type="entry name" value="LARGE RIBOSOMAL SUBUNIT PROTEIN BL32"/>
    <property type="match status" value="1"/>
</dbReference>
<dbReference type="Pfam" id="PF01783">
    <property type="entry name" value="Ribosomal_L32p"/>
    <property type="match status" value="1"/>
</dbReference>
<dbReference type="SUPFAM" id="SSF57829">
    <property type="entry name" value="Zn-binding ribosomal proteins"/>
    <property type="match status" value="1"/>
</dbReference>
<comment type="similarity">
    <text evidence="1">Belongs to the bacterial ribosomal protein bL32 family.</text>
</comment>
<proteinExistence type="inferred from homology"/>
<name>RL32_DESHY</name>
<sequence length="59" mass="6844">MGVAQHRQSKSRVRKRRAMWKLTAPNHIECPQCHKPKMPHHVCPSCGYYKAKEVISMGE</sequence>
<protein>
    <recommendedName>
        <fullName evidence="1">Large ribosomal subunit protein bL32</fullName>
    </recommendedName>
    <alternativeName>
        <fullName evidence="2">50S ribosomal protein L32</fullName>
    </alternativeName>
</protein>